<name>DNA2_ACAPL</name>
<reference key="1">
    <citation type="journal article" date="2004" name="Toxicon">
        <title>Plancitoxins, lethal factors from the crown-of-thorns starfish Acanthaster planci, are deoxyribonucleases II.</title>
        <authorList>
            <person name="Shiomi K."/>
            <person name="Midorikawa S."/>
            <person name="Ishida M."/>
            <person name="Nagashima Y."/>
            <person name="Nagai H."/>
        </authorList>
    </citation>
    <scope>NUCLEOTIDE SEQUENCE [MRNA]</scope>
    <scope>PROTEIN SEQUENCE OF 27-68 AND 119-153</scope>
    <scope>TOXIC DOSE</scope>
    <source>
        <tissue>Spine</tissue>
    </source>
</reference>
<reference key="2">
    <citation type="journal article" date="1990" name="Toxicon">
        <title>Liver damage by the crown-of-thorns starfish (Acanthaster planci) lethal factor.</title>
        <authorList>
            <person name="Shiomi K."/>
            <person name="Yamamoto S."/>
            <person name="Yamanaka H."/>
            <person name="Kikuchi T."/>
            <person name="Konno K."/>
        </authorList>
    </citation>
    <scope>FUNCTION</scope>
</reference>
<reference key="3">
    <citation type="journal article" date="2006" name="Toxicon">
        <title>Caspase-independent apoptosis induced in rat liver cells by plancitoxin I, the major lethal factor from the crown-of-thorns starfish Acanthaster planci venom.</title>
        <authorList>
            <person name="Ota E."/>
            <person name="Nagashima Y."/>
            <person name="Shiomi K."/>
            <person name="Sakurai T."/>
            <person name="Kojima C."/>
            <person name="Waalkes M.P."/>
            <person name="Himeno S."/>
        </authorList>
    </citation>
    <scope>FUNCTION</scope>
</reference>
<keyword id="KW-0053">Apoptosis</keyword>
<keyword id="KW-0903">Direct protein sequencing</keyword>
<keyword id="KW-1015">Disulfide bond</keyword>
<keyword id="KW-0255">Endonuclease</keyword>
<keyword id="KW-0325">Glycoprotein</keyword>
<keyword id="KW-0378">Hydrolase</keyword>
<keyword id="KW-0540">Nuclease</keyword>
<keyword id="KW-1185">Reference proteome</keyword>
<keyword id="KW-0964">Secreted</keyword>
<keyword id="KW-0732">Signal</keyword>
<keyword id="KW-0800">Toxin</keyword>
<sequence length="358" mass="39686">MPSSVIMFTFLALTVLTAVMVGTSEAVSCMDNKNKPVDWFIVYKLPQDSASSKPVIREGYGQMYMDVNNQALKFSSTSLKDDDHAIAYTVDDIYKNHGKGNLAHVMYNDQPPAGEEIQSGLVGHTKGVLAFDGTSGFWLVHSVPKFPLPASKSYNWPDNAKRNGQTLLCITFKYDQFEKIGQQLKYNYPGVYDSDLPSKLVGKTPSIVDLVKNVHVTSPPWNRQLNLQSKSGQTFVSFNKASKWGEDLYKNWLATHFKSGLYCETWQNGGRNLNSSCEAGLNVYNVKKVSLSGGSDFKGTKDHSKWAVTTKSGLKWTCIGGINRQTSQMYRGGGAVCLENANVHKAFYDSVAEYEPCT</sequence>
<feature type="signal peptide" evidence="3">
    <location>
        <begin position="1"/>
        <end position="26"/>
    </location>
</feature>
<feature type="chain" id="PRO_0000272031" description="Plancitoxin-1 subunit beta">
    <location>
        <begin position="27"/>
        <end position="118"/>
    </location>
</feature>
<feature type="chain" id="PRO_0000272032" description="Plancitoxin-1 subunit alpha">
    <location>
        <begin position="119"/>
        <end position="358"/>
    </location>
</feature>
<feature type="active site" evidence="1">
    <location>
        <position position="303"/>
    </location>
</feature>
<feature type="glycosylation site" description="N-linked (GlcNAc...) asparagine" evidence="2">
    <location>
        <position position="274"/>
    </location>
</feature>
<proteinExistence type="evidence at protein level"/>
<dbReference type="EC" id="3.1.22.1"/>
<dbReference type="EMBL" id="AB121229">
    <property type="protein sequence ID" value="BAD13432.1"/>
    <property type="molecule type" value="mRNA"/>
</dbReference>
<dbReference type="SMR" id="Q75WF2"/>
<dbReference type="OrthoDB" id="10261598at2759"/>
<dbReference type="BRENDA" id="3.1.22.1">
    <property type="organism ID" value="8237"/>
</dbReference>
<dbReference type="Proteomes" id="UP000694845">
    <property type="component" value="Unplaced"/>
</dbReference>
<dbReference type="GO" id="GO:0005576">
    <property type="term" value="C:extracellular region"/>
    <property type="evidence" value="ECO:0007669"/>
    <property type="project" value="UniProtKB-SubCell"/>
</dbReference>
<dbReference type="GO" id="GO:0004531">
    <property type="term" value="F:deoxyribonuclease II activity"/>
    <property type="evidence" value="ECO:0007669"/>
    <property type="project" value="UniProtKB-EC"/>
</dbReference>
<dbReference type="GO" id="GO:0090729">
    <property type="term" value="F:toxin activity"/>
    <property type="evidence" value="ECO:0007669"/>
    <property type="project" value="UniProtKB-KW"/>
</dbReference>
<dbReference type="GO" id="GO:0006309">
    <property type="term" value="P:apoptotic DNA fragmentation"/>
    <property type="evidence" value="ECO:0007669"/>
    <property type="project" value="TreeGrafter"/>
</dbReference>
<dbReference type="CDD" id="cd09120">
    <property type="entry name" value="PLDc_DNaseII_1"/>
    <property type="match status" value="1"/>
</dbReference>
<dbReference type="CDD" id="cd09121">
    <property type="entry name" value="PLDc_DNaseII_2"/>
    <property type="match status" value="1"/>
</dbReference>
<dbReference type="InterPro" id="IPR004947">
    <property type="entry name" value="DNase_II"/>
</dbReference>
<dbReference type="PANTHER" id="PTHR10858">
    <property type="entry name" value="DEOXYRIBONUCLEASE II"/>
    <property type="match status" value="1"/>
</dbReference>
<dbReference type="PANTHER" id="PTHR10858:SF23">
    <property type="entry name" value="DEOXYRIBONUCLEASE II"/>
    <property type="match status" value="1"/>
</dbReference>
<dbReference type="Pfam" id="PF03265">
    <property type="entry name" value="DNase_II"/>
    <property type="match status" value="1"/>
</dbReference>
<comment type="function">
    <text evidence="4 5">Hydrolyzes DNA with an optimum pH of 7.2. Is potently hepatotoxic. It induces caspase-independent apoptosis (on rat liver cells) through the following procedure: binding to a specific receptor in the cytoplasmic membrane, entering the cell, entering the nucleus and degrading DNA.</text>
</comment>
<comment type="catalytic activity">
    <reaction>
        <text>Endonucleolytic cleavage to nucleoside 3'-phosphates and 3'-phosphooligonucleotide end-products.</text>
        <dbReference type="EC" id="3.1.22.1"/>
    </reaction>
</comment>
<comment type="subunit">
    <text>Plancitoxin is a heterodimer of alpha and beta subunits; disulfide-linked by a single disulfide bond.</text>
</comment>
<comment type="subcellular location">
    <subcellularLocation>
        <location>Secreted</location>
    </subcellularLocation>
</comment>
<comment type="tissue specificity">
    <text>Venom gland.</text>
</comment>
<comment type="toxic dose">
    <text evidence="3">LD(50) is 140 ug/kg by intraventricular injection into mice.</text>
</comment>
<comment type="similarity">
    <text evidence="6">Belongs to the DNase II family.</text>
</comment>
<organism>
    <name type="scientific">Acanthaster planci</name>
    <name type="common">Crown-of-thorns starfish</name>
    <dbReference type="NCBI Taxonomy" id="133434"/>
    <lineage>
        <taxon>Eukaryota</taxon>
        <taxon>Metazoa</taxon>
        <taxon>Echinodermata</taxon>
        <taxon>Eleutherozoa</taxon>
        <taxon>Asterozoa</taxon>
        <taxon>Asteroidea</taxon>
        <taxon>Valvatacea</taxon>
        <taxon>Valvatida</taxon>
        <taxon>Acanthasteridae</taxon>
        <taxon>Acanthaster</taxon>
    </lineage>
</organism>
<accession>Q75WF2</accession>
<evidence type="ECO:0000250" key="1"/>
<evidence type="ECO:0000255" key="2"/>
<evidence type="ECO:0000269" key="3">
    <source>
    </source>
</evidence>
<evidence type="ECO:0000269" key="4">
    <source>
    </source>
</evidence>
<evidence type="ECO:0000269" key="5">
    <source>
    </source>
</evidence>
<evidence type="ECO:0000305" key="6"/>
<protein>
    <recommendedName>
        <fullName>Plancitoxin-1</fullName>
        <ecNumber>3.1.22.1</ecNumber>
    </recommendedName>
    <alternativeName>
        <fullName>Plancitoxin I</fullName>
        <shortName>Plan-I</shortName>
    </alternativeName>
    <component>
        <recommendedName>
            <fullName>Plancitoxin-1 subunit alpha</fullName>
        </recommendedName>
    </component>
    <component>
        <recommendedName>
            <fullName>Plancitoxin-1 subunit beta</fullName>
        </recommendedName>
    </component>
</protein>